<feature type="chain" id="PRO_0000060981" description="Cytochrome b">
    <location>
        <begin position="1"/>
        <end position="380"/>
    </location>
</feature>
<feature type="transmembrane region" description="Helical" evidence="2">
    <location>
        <begin position="33"/>
        <end position="53"/>
    </location>
</feature>
<feature type="transmembrane region" description="Helical" evidence="2">
    <location>
        <begin position="77"/>
        <end position="98"/>
    </location>
</feature>
<feature type="transmembrane region" description="Helical" evidence="2">
    <location>
        <begin position="113"/>
        <end position="133"/>
    </location>
</feature>
<feature type="transmembrane region" description="Helical" evidence="2">
    <location>
        <begin position="178"/>
        <end position="198"/>
    </location>
</feature>
<feature type="transmembrane region" description="Helical" evidence="2">
    <location>
        <begin position="226"/>
        <end position="246"/>
    </location>
</feature>
<feature type="transmembrane region" description="Helical" evidence="2">
    <location>
        <begin position="288"/>
        <end position="308"/>
    </location>
</feature>
<feature type="transmembrane region" description="Helical" evidence="2">
    <location>
        <begin position="320"/>
        <end position="340"/>
    </location>
</feature>
<feature type="transmembrane region" description="Helical" evidence="2">
    <location>
        <begin position="347"/>
        <end position="367"/>
    </location>
</feature>
<feature type="binding site" description="axial binding residue" evidence="2">
    <location>
        <position position="83"/>
    </location>
    <ligand>
        <name>heme b</name>
        <dbReference type="ChEBI" id="CHEBI:60344"/>
        <label>b562</label>
    </ligand>
    <ligandPart>
        <name>Fe</name>
        <dbReference type="ChEBI" id="CHEBI:18248"/>
    </ligandPart>
</feature>
<feature type="binding site" description="axial binding residue" evidence="2">
    <location>
        <position position="97"/>
    </location>
    <ligand>
        <name>heme b</name>
        <dbReference type="ChEBI" id="CHEBI:60344"/>
        <label>b566</label>
    </ligand>
    <ligandPart>
        <name>Fe</name>
        <dbReference type="ChEBI" id="CHEBI:18248"/>
    </ligandPart>
</feature>
<feature type="binding site" description="axial binding residue" evidence="2">
    <location>
        <position position="182"/>
    </location>
    <ligand>
        <name>heme b</name>
        <dbReference type="ChEBI" id="CHEBI:60344"/>
        <label>b562</label>
    </ligand>
    <ligandPart>
        <name>Fe</name>
        <dbReference type="ChEBI" id="CHEBI:18248"/>
    </ligandPart>
</feature>
<feature type="binding site" description="axial binding residue" evidence="2">
    <location>
        <position position="196"/>
    </location>
    <ligand>
        <name>heme b</name>
        <dbReference type="ChEBI" id="CHEBI:60344"/>
        <label>b566</label>
    </ligand>
    <ligandPart>
        <name>Fe</name>
        <dbReference type="ChEBI" id="CHEBI:18248"/>
    </ligandPart>
</feature>
<feature type="binding site" evidence="2">
    <location>
        <position position="201"/>
    </location>
    <ligand>
        <name>a ubiquinone</name>
        <dbReference type="ChEBI" id="CHEBI:16389"/>
    </ligand>
</feature>
<reference key="1">
    <citation type="journal article" date="1994" name="Biochim. Biophys. Acta">
        <title>Sequence analysis of 12 structural genes and a novel non-coding region from mitochondrial DNA of Atlantic cod, Gadus morhua.</title>
        <authorList>
            <person name="Johansen S."/>
            <person name="Johansen T."/>
        </authorList>
    </citation>
    <scope>NUCLEOTIDE SEQUENCE [GENOMIC DNA]</scope>
    <source>
        <strain>AN1</strain>
        <strain>Norwegian coastal 1</strain>
    </source>
</reference>
<reference key="2">
    <citation type="journal article" date="1996" name="Mol. Mar. Biol. Biotechnol.">
        <title>The complete mitochondrial DNA sequence of Atlantic cod (Gadus morhua): relevance to taxonomic studies among codfishes.</title>
        <authorList>
            <person name="Johansen S."/>
            <person name="Bakke I."/>
        </authorList>
    </citation>
    <scope>NUCLEOTIDE SEQUENCE [GENOMIC DNA]</scope>
    <source>
        <strain>Norwegian coastal 1</strain>
    </source>
</reference>
<comment type="function">
    <text evidence="2">Component of the ubiquinol-cytochrome c reductase complex (complex III or cytochrome b-c1 complex) that is part of the mitochondrial respiratory chain. The b-c1 complex mediates electron transfer from ubiquinol to cytochrome c. Contributes to the generation of a proton gradient across the mitochondrial membrane that is then used for ATP synthesis.</text>
</comment>
<comment type="cofactor">
    <cofactor evidence="2">
        <name>heme b</name>
        <dbReference type="ChEBI" id="CHEBI:60344"/>
    </cofactor>
    <text evidence="2">Binds 2 heme b groups non-covalently.</text>
</comment>
<comment type="subunit">
    <text evidence="2">The cytochrome bc1 complex contains 3 respiratory subunits (MT-CYB, CYC1 and UQCRFS1), 2 core proteins (UQCRC1 and UQCRC2) and probably 6 low-molecular weight proteins.</text>
</comment>
<comment type="subcellular location">
    <subcellularLocation>
        <location evidence="2">Mitochondrion inner membrane</location>
        <topology evidence="2">Multi-pass membrane protein</topology>
    </subcellularLocation>
</comment>
<comment type="miscellaneous">
    <text evidence="1">Heme 1 (or BL or b562) is low-potential and absorbs at about 562 nm, and heme 2 (or BH or b566) is high-potential and absorbs at about 566 nm.</text>
</comment>
<comment type="similarity">
    <text evidence="3 4">Belongs to the cytochrome b family.</text>
</comment>
<comment type="caution">
    <text evidence="2">The full-length protein contains only eight transmembrane helices, not nine as predicted by bioinformatics tools.</text>
</comment>
<geneLocation type="mitochondrion"/>
<organism>
    <name type="scientific">Gadus morhua</name>
    <name type="common">Atlantic cod</name>
    <dbReference type="NCBI Taxonomy" id="8049"/>
    <lineage>
        <taxon>Eukaryota</taxon>
        <taxon>Metazoa</taxon>
        <taxon>Chordata</taxon>
        <taxon>Craniata</taxon>
        <taxon>Vertebrata</taxon>
        <taxon>Euteleostomi</taxon>
        <taxon>Actinopterygii</taxon>
        <taxon>Neopterygii</taxon>
        <taxon>Teleostei</taxon>
        <taxon>Neoteleostei</taxon>
        <taxon>Acanthomorphata</taxon>
        <taxon>Zeiogadaria</taxon>
        <taxon>Gadariae</taxon>
        <taxon>Gadiformes</taxon>
        <taxon>Gadoidei</taxon>
        <taxon>Gadidae</taxon>
        <taxon>Gadus</taxon>
    </lineage>
</organism>
<sequence length="380" mass="42625">MASLRKTHPILKIANSALVDLPAPSNISVWWNFGSLLGLCLITQLLTGLFLAMHYTSDIETAFSSVVHICRDVNYGWLIRNMHANGASFFFICLYMHIARGLYYGSYLFVETWNIGVVLFLLVMMTSFVGYVLPWGQMSFWGATVITNLMSTVPYVGDALVQWIWGGFSVDNATLTRFFAFHFLFPFVVAAFTMLHLLFLHETGSNNPTGINSNADKIPFHPYFTYKDLLGFAVMLLGLTALALFAPNLLGDPDNFTPANPIVTPPHVKPEWYFLFAYAILRSIPNKLGGVLALLFSILVLMVVPFLHTSKQRGLTFRPLTQMLFWVLVADMLVLTWIGGVPVEHPFIIIGQVASVLYFSLFLVLFPLAGMTENKALEWN</sequence>
<name>CYB_GADMO</name>
<protein>
    <recommendedName>
        <fullName>Cytochrome b</fullName>
    </recommendedName>
    <alternativeName>
        <fullName>Complex III subunit 3</fullName>
    </alternativeName>
    <alternativeName>
        <fullName>Complex III subunit III</fullName>
    </alternativeName>
    <alternativeName>
        <fullName>Cytochrome b-c1 complex subunit 3</fullName>
    </alternativeName>
    <alternativeName>
        <fullName>Ubiquinol-cytochrome-c reductase complex cytochrome b subunit</fullName>
    </alternativeName>
</protein>
<gene>
    <name type="primary">mt-cyb</name>
    <name type="synonym">cob</name>
    <name type="synonym">cytb</name>
    <name type="synonym">mtcyb</name>
</gene>
<accession>Q37080</accession>
<proteinExistence type="inferred from homology"/>
<dbReference type="EMBL" id="X76366">
    <property type="protein sequence ID" value="CAA53968.1"/>
    <property type="status" value="ALT_TERM"/>
    <property type="molecule type" value="Genomic_DNA"/>
</dbReference>
<dbReference type="EMBL" id="X76365">
    <property type="protein sequence ID" value="CAA53967.1"/>
    <property type="status" value="ALT_TERM"/>
    <property type="molecule type" value="Genomic_DNA"/>
</dbReference>
<dbReference type="EMBL" id="X99772">
    <property type="status" value="NOT_ANNOTATED_CDS"/>
    <property type="molecule type" value="Genomic_DNA"/>
</dbReference>
<dbReference type="RefSeq" id="NP_007821.2">
    <property type="nucleotide sequence ID" value="NC_002081.1"/>
</dbReference>
<dbReference type="SMR" id="Q37080"/>
<dbReference type="GeneID" id="808447"/>
<dbReference type="CTD" id="4519"/>
<dbReference type="OrthoDB" id="244at2759"/>
<dbReference type="Proteomes" id="UP000694546">
    <property type="component" value="Unplaced"/>
</dbReference>
<dbReference type="GO" id="GO:0005743">
    <property type="term" value="C:mitochondrial inner membrane"/>
    <property type="evidence" value="ECO:0007669"/>
    <property type="project" value="UniProtKB-SubCell"/>
</dbReference>
<dbReference type="GO" id="GO:0045275">
    <property type="term" value="C:respiratory chain complex III"/>
    <property type="evidence" value="ECO:0007669"/>
    <property type="project" value="InterPro"/>
</dbReference>
<dbReference type="GO" id="GO:0046872">
    <property type="term" value="F:metal ion binding"/>
    <property type="evidence" value="ECO:0007669"/>
    <property type="project" value="UniProtKB-KW"/>
</dbReference>
<dbReference type="GO" id="GO:0008121">
    <property type="term" value="F:ubiquinol-cytochrome-c reductase activity"/>
    <property type="evidence" value="ECO:0007669"/>
    <property type="project" value="InterPro"/>
</dbReference>
<dbReference type="GO" id="GO:0006122">
    <property type="term" value="P:mitochondrial electron transport, ubiquinol to cytochrome c"/>
    <property type="evidence" value="ECO:0007669"/>
    <property type="project" value="TreeGrafter"/>
</dbReference>
<dbReference type="CDD" id="cd00290">
    <property type="entry name" value="cytochrome_b_C"/>
    <property type="match status" value="1"/>
</dbReference>
<dbReference type="CDD" id="cd00284">
    <property type="entry name" value="Cytochrome_b_N"/>
    <property type="match status" value="1"/>
</dbReference>
<dbReference type="FunFam" id="1.20.810.10:FF:000002">
    <property type="entry name" value="Cytochrome b"/>
    <property type="match status" value="1"/>
</dbReference>
<dbReference type="Gene3D" id="1.20.810.10">
    <property type="entry name" value="Cytochrome Bc1 Complex, Chain C"/>
    <property type="match status" value="1"/>
</dbReference>
<dbReference type="InterPro" id="IPR005798">
    <property type="entry name" value="Cyt_b/b6_C"/>
</dbReference>
<dbReference type="InterPro" id="IPR036150">
    <property type="entry name" value="Cyt_b/b6_C_sf"/>
</dbReference>
<dbReference type="InterPro" id="IPR005797">
    <property type="entry name" value="Cyt_b/b6_N"/>
</dbReference>
<dbReference type="InterPro" id="IPR027387">
    <property type="entry name" value="Cytb/b6-like_sf"/>
</dbReference>
<dbReference type="InterPro" id="IPR030689">
    <property type="entry name" value="Cytochrome_b"/>
</dbReference>
<dbReference type="InterPro" id="IPR048260">
    <property type="entry name" value="Cytochrome_b_C_euk/bac"/>
</dbReference>
<dbReference type="InterPro" id="IPR048259">
    <property type="entry name" value="Cytochrome_b_N_euk/bac"/>
</dbReference>
<dbReference type="InterPro" id="IPR016174">
    <property type="entry name" value="Di-haem_cyt_TM"/>
</dbReference>
<dbReference type="PANTHER" id="PTHR19271">
    <property type="entry name" value="CYTOCHROME B"/>
    <property type="match status" value="1"/>
</dbReference>
<dbReference type="PANTHER" id="PTHR19271:SF16">
    <property type="entry name" value="CYTOCHROME B"/>
    <property type="match status" value="1"/>
</dbReference>
<dbReference type="Pfam" id="PF00032">
    <property type="entry name" value="Cytochrom_B_C"/>
    <property type="match status" value="1"/>
</dbReference>
<dbReference type="Pfam" id="PF00033">
    <property type="entry name" value="Cytochrome_B"/>
    <property type="match status" value="1"/>
</dbReference>
<dbReference type="PIRSF" id="PIRSF038885">
    <property type="entry name" value="COB"/>
    <property type="match status" value="1"/>
</dbReference>
<dbReference type="SUPFAM" id="SSF81648">
    <property type="entry name" value="a domain/subunit of cytochrome bc1 complex (Ubiquinol-cytochrome c reductase)"/>
    <property type="match status" value="1"/>
</dbReference>
<dbReference type="SUPFAM" id="SSF81342">
    <property type="entry name" value="Transmembrane di-heme cytochromes"/>
    <property type="match status" value="1"/>
</dbReference>
<dbReference type="PROSITE" id="PS51003">
    <property type="entry name" value="CYTB_CTER"/>
    <property type="match status" value="1"/>
</dbReference>
<dbReference type="PROSITE" id="PS51002">
    <property type="entry name" value="CYTB_NTER"/>
    <property type="match status" value="1"/>
</dbReference>
<evidence type="ECO:0000250" key="1"/>
<evidence type="ECO:0000250" key="2">
    <source>
        <dbReference type="UniProtKB" id="P00157"/>
    </source>
</evidence>
<evidence type="ECO:0000255" key="3">
    <source>
        <dbReference type="PROSITE-ProRule" id="PRU00967"/>
    </source>
</evidence>
<evidence type="ECO:0000255" key="4">
    <source>
        <dbReference type="PROSITE-ProRule" id="PRU00968"/>
    </source>
</evidence>
<keyword id="KW-0249">Electron transport</keyword>
<keyword id="KW-0349">Heme</keyword>
<keyword id="KW-0408">Iron</keyword>
<keyword id="KW-0472">Membrane</keyword>
<keyword id="KW-0479">Metal-binding</keyword>
<keyword id="KW-0496">Mitochondrion</keyword>
<keyword id="KW-0999">Mitochondrion inner membrane</keyword>
<keyword id="KW-1185">Reference proteome</keyword>
<keyword id="KW-0679">Respiratory chain</keyword>
<keyword id="KW-0812">Transmembrane</keyword>
<keyword id="KW-1133">Transmembrane helix</keyword>
<keyword id="KW-0813">Transport</keyword>
<keyword id="KW-0830">Ubiquinone</keyword>